<keyword id="KW-0687">Ribonucleoprotein</keyword>
<keyword id="KW-0689">Ribosomal protein</keyword>
<dbReference type="EMBL" id="AM181176">
    <property type="protein sequence ID" value="CAY52221.1"/>
    <property type="molecule type" value="Genomic_DNA"/>
</dbReference>
<dbReference type="RefSeq" id="WP_003176049.1">
    <property type="nucleotide sequence ID" value="NC_012660.1"/>
</dbReference>
<dbReference type="SMR" id="C3K1X7"/>
<dbReference type="STRING" id="294.SRM1_04910"/>
<dbReference type="GeneID" id="98113459"/>
<dbReference type="eggNOG" id="COG0211">
    <property type="taxonomic scope" value="Bacteria"/>
</dbReference>
<dbReference type="HOGENOM" id="CLU_095424_4_1_6"/>
<dbReference type="OrthoDB" id="9803474at2"/>
<dbReference type="GO" id="GO:0022625">
    <property type="term" value="C:cytosolic large ribosomal subunit"/>
    <property type="evidence" value="ECO:0007669"/>
    <property type="project" value="TreeGrafter"/>
</dbReference>
<dbReference type="GO" id="GO:0003735">
    <property type="term" value="F:structural constituent of ribosome"/>
    <property type="evidence" value="ECO:0007669"/>
    <property type="project" value="InterPro"/>
</dbReference>
<dbReference type="GO" id="GO:0006412">
    <property type="term" value="P:translation"/>
    <property type="evidence" value="ECO:0007669"/>
    <property type="project" value="UniProtKB-UniRule"/>
</dbReference>
<dbReference type="FunFam" id="2.40.50.100:FF:000001">
    <property type="entry name" value="50S ribosomal protein L27"/>
    <property type="match status" value="1"/>
</dbReference>
<dbReference type="Gene3D" id="2.40.50.100">
    <property type="match status" value="1"/>
</dbReference>
<dbReference type="HAMAP" id="MF_00539">
    <property type="entry name" value="Ribosomal_bL27"/>
    <property type="match status" value="1"/>
</dbReference>
<dbReference type="InterPro" id="IPR001684">
    <property type="entry name" value="Ribosomal_bL27"/>
</dbReference>
<dbReference type="InterPro" id="IPR018261">
    <property type="entry name" value="Ribosomal_bL27_CS"/>
</dbReference>
<dbReference type="NCBIfam" id="TIGR00062">
    <property type="entry name" value="L27"/>
    <property type="match status" value="1"/>
</dbReference>
<dbReference type="PANTHER" id="PTHR15893:SF0">
    <property type="entry name" value="LARGE RIBOSOMAL SUBUNIT PROTEIN BL27M"/>
    <property type="match status" value="1"/>
</dbReference>
<dbReference type="PANTHER" id="PTHR15893">
    <property type="entry name" value="RIBOSOMAL PROTEIN L27"/>
    <property type="match status" value="1"/>
</dbReference>
<dbReference type="Pfam" id="PF01016">
    <property type="entry name" value="Ribosomal_L27"/>
    <property type="match status" value="1"/>
</dbReference>
<dbReference type="PRINTS" id="PR00063">
    <property type="entry name" value="RIBOSOMALL27"/>
</dbReference>
<dbReference type="SUPFAM" id="SSF110324">
    <property type="entry name" value="Ribosomal L27 protein-like"/>
    <property type="match status" value="1"/>
</dbReference>
<dbReference type="PROSITE" id="PS00831">
    <property type="entry name" value="RIBOSOMAL_L27"/>
    <property type="match status" value="1"/>
</dbReference>
<accession>C3K1X7</accession>
<evidence type="ECO:0000255" key="1">
    <source>
        <dbReference type="HAMAP-Rule" id="MF_00539"/>
    </source>
</evidence>
<evidence type="ECO:0000305" key="2"/>
<name>RL27_PSEFS</name>
<protein>
    <recommendedName>
        <fullName evidence="1">Large ribosomal subunit protein bL27</fullName>
    </recommendedName>
    <alternativeName>
        <fullName evidence="2">50S ribosomal protein L27</fullName>
    </alternativeName>
</protein>
<sequence length="85" mass="9220">MAHKKAGGSTRNGRDSEAKRLGVKMYGGQKIIPGNIIVRQRGTQFHAGYGVGMGKDHTLFAKIEGVIKFEVKGAFNRRYVSVVAA</sequence>
<reference key="1">
    <citation type="journal article" date="2009" name="Genome Biol.">
        <title>Genomic and genetic analyses of diversity and plant interactions of Pseudomonas fluorescens.</title>
        <authorList>
            <person name="Silby M.W."/>
            <person name="Cerdeno-Tarraga A.M."/>
            <person name="Vernikos G.S."/>
            <person name="Giddens S.R."/>
            <person name="Jackson R.W."/>
            <person name="Preston G.M."/>
            <person name="Zhang X.-X."/>
            <person name="Moon C.D."/>
            <person name="Gehrig S.M."/>
            <person name="Godfrey S.A.C."/>
            <person name="Knight C.G."/>
            <person name="Malone J.G."/>
            <person name="Robinson Z."/>
            <person name="Spiers A.J."/>
            <person name="Harris S."/>
            <person name="Challis G.L."/>
            <person name="Yaxley A.M."/>
            <person name="Harris D."/>
            <person name="Seeger K."/>
            <person name="Murphy L."/>
            <person name="Rutter S."/>
            <person name="Squares R."/>
            <person name="Quail M.A."/>
            <person name="Saunders E."/>
            <person name="Mavromatis K."/>
            <person name="Brettin T.S."/>
            <person name="Bentley S.D."/>
            <person name="Hothersall J."/>
            <person name="Stephens E."/>
            <person name="Thomas C.M."/>
            <person name="Parkhill J."/>
            <person name="Levy S.B."/>
            <person name="Rainey P.B."/>
            <person name="Thomson N.R."/>
        </authorList>
    </citation>
    <scope>NUCLEOTIDE SEQUENCE [LARGE SCALE GENOMIC DNA]</scope>
    <source>
        <strain>SBW25</strain>
    </source>
</reference>
<feature type="chain" id="PRO_1000211937" description="Large ribosomal subunit protein bL27">
    <location>
        <begin position="1"/>
        <end position="85"/>
    </location>
</feature>
<organism>
    <name type="scientific">Pseudomonas fluorescens (strain SBW25)</name>
    <dbReference type="NCBI Taxonomy" id="216595"/>
    <lineage>
        <taxon>Bacteria</taxon>
        <taxon>Pseudomonadati</taxon>
        <taxon>Pseudomonadota</taxon>
        <taxon>Gammaproteobacteria</taxon>
        <taxon>Pseudomonadales</taxon>
        <taxon>Pseudomonadaceae</taxon>
        <taxon>Pseudomonas</taxon>
    </lineage>
</organism>
<proteinExistence type="inferred from homology"/>
<comment type="similarity">
    <text evidence="1">Belongs to the bacterial ribosomal protein bL27 family.</text>
</comment>
<gene>
    <name evidence="1" type="primary">rpmA</name>
    <name type="ordered locus">PFLU_5170</name>
</gene>